<accession>B7GJ63</accession>
<comment type="function">
    <text evidence="1">One of the primary rRNA binding proteins, it binds directly to 16S rRNA where it nucleates assembly of the head domain of the 30S subunit. Is located at the subunit interface close to the decoding center, probably blocks exit of the E-site tRNA.</text>
</comment>
<comment type="subunit">
    <text evidence="1">Part of the 30S ribosomal subunit. Contacts proteins S9 and S11.</text>
</comment>
<comment type="similarity">
    <text evidence="1">Belongs to the universal ribosomal protein uS7 family.</text>
</comment>
<reference key="1">
    <citation type="journal article" date="2008" name="Genome Biol.">
        <title>Encapsulated in silica: genome, proteome and physiology of the thermophilic bacterium Anoxybacillus flavithermus WK1.</title>
        <authorList>
            <person name="Saw J.H."/>
            <person name="Mountain B.W."/>
            <person name="Feng L."/>
            <person name="Omelchenko M.V."/>
            <person name="Hou S."/>
            <person name="Saito J.A."/>
            <person name="Stott M.B."/>
            <person name="Li D."/>
            <person name="Zhao G."/>
            <person name="Wu J."/>
            <person name="Galperin M.Y."/>
            <person name="Koonin E.V."/>
            <person name="Makarova K.S."/>
            <person name="Wolf Y.I."/>
            <person name="Rigden D.J."/>
            <person name="Dunfield P.F."/>
            <person name="Wang L."/>
            <person name="Alam M."/>
        </authorList>
    </citation>
    <scope>NUCLEOTIDE SEQUENCE [LARGE SCALE GENOMIC DNA]</scope>
    <source>
        <strain>DSM 21510 / WK1</strain>
    </source>
</reference>
<dbReference type="EMBL" id="CP000922">
    <property type="protein sequence ID" value="ACJ32485.1"/>
    <property type="molecule type" value="Genomic_DNA"/>
</dbReference>
<dbReference type="RefSeq" id="WP_004888658.1">
    <property type="nucleotide sequence ID" value="NC_011567.1"/>
</dbReference>
<dbReference type="SMR" id="B7GJ63"/>
<dbReference type="STRING" id="491915.Aflv_0101"/>
<dbReference type="GeneID" id="7036300"/>
<dbReference type="KEGG" id="afl:Aflv_0101"/>
<dbReference type="eggNOG" id="COG0049">
    <property type="taxonomic scope" value="Bacteria"/>
</dbReference>
<dbReference type="HOGENOM" id="CLU_072226_1_1_9"/>
<dbReference type="Proteomes" id="UP000000742">
    <property type="component" value="Chromosome"/>
</dbReference>
<dbReference type="GO" id="GO:0015935">
    <property type="term" value="C:small ribosomal subunit"/>
    <property type="evidence" value="ECO:0007669"/>
    <property type="project" value="InterPro"/>
</dbReference>
<dbReference type="GO" id="GO:0019843">
    <property type="term" value="F:rRNA binding"/>
    <property type="evidence" value="ECO:0007669"/>
    <property type="project" value="UniProtKB-UniRule"/>
</dbReference>
<dbReference type="GO" id="GO:0003735">
    <property type="term" value="F:structural constituent of ribosome"/>
    <property type="evidence" value="ECO:0007669"/>
    <property type="project" value="InterPro"/>
</dbReference>
<dbReference type="GO" id="GO:0000049">
    <property type="term" value="F:tRNA binding"/>
    <property type="evidence" value="ECO:0007669"/>
    <property type="project" value="UniProtKB-UniRule"/>
</dbReference>
<dbReference type="GO" id="GO:0006412">
    <property type="term" value="P:translation"/>
    <property type="evidence" value="ECO:0007669"/>
    <property type="project" value="UniProtKB-UniRule"/>
</dbReference>
<dbReference type="CDD" id="cd14869">
    <property type="entry name" value="uS7_Bacteria"/>
    <property type="match status" value="1"/>
</dbReference>
<dbReference type="FunFam" id="1.10.455.10:FF:000001">
    <property type="entry name" value="30S ribosomal protein S7"/>
    <property type="match status" value="1"/>
</dbReference>
<dbReference type="Gene3D" id="1.10.455.10">
    <property type="entry name" value="Ribosomal protein S7 domain"/>
    <property type="match status" value="1"/>
</dbReference>
<dbReference type="HAMAP" id="MF_00480_B">
    <property type="entry name" value="Ribosomal_uS7_B"/>
    <property type="match status" value="1"/>
</dbReference>
<dbReference type="InterPro" id="IPR000235">
    <property type="entry name" value="Ribosomal_uS7"/>
</dbReference>
<dbReference type="InterPro" id="IPR005717">
    <property type="entry name" value="Ribosomal_uS7_bac/org-type"/>
</dbReference>
<dbReference type="InterPro" id="IPR020606">
    <property type="entry name" value="Ribosomal_uS7_CS"/>
</dbReference>
<dbReference type="InterPro" id="IPR023798">
    <property type="entry name" value="Ribosomal_uS7_dom"/>
</dbReference>
<dbReference type="InterPro" id="IPR036823">
    <property type="entry name" value="Ribosomal_uS7_dom_sf"/>
</dbReference>
<dbReference type="NCBIfam" id="TIGR01029">
    <property type="entry name" value="rpsG_bact"/>
    <property type="match status" value="1"/>
</dbReference>
<dbReference type="PANTHER" id="PTHR11205">
    <property type="entry name" value="RIBOSOMAL PROTEIN S7"/>
    <property type="match status" value="1"/>
</dbReference>
<dbReference type="Pfam" id="PF00177">
    <property type="entry name" value="Ribosomal_S7"/>
    <property type="match status" value="1"/>
</dbReference>
<dbReference type="PIRSF" id="PIRSF002122">
    <property type="entry name" value="RPS7p_RPS7a_RPS5e_RPS7o"/>
    <property type="match status" value="1"/>
</dbReference>
<dbReference type="SUPFAM" id="SSF47973">
    <property type="entry name" value="Ribosomal protein S7"/>
    <property type="match status" value="1"/>
</dbReference>
<dbReference type="PROSITE" id="PS00052">
    <property type="entry name" value="RIBOSOMAL_S7"/>
    <property type="match status" value="1"/>
</dbReference>
<protein>
    <recommendedName>
        <fullName evidence="1">Small ribosomal subunit protein uS7</fullName>
    </recommendedName>
    <alternativeName>
        <fullName evidence="2">30S ribosomal protein S7</fullName>
    </alternativeName>
</protein>
<feature type="chain" id="PRO_1000125890" description="Small ribosomal subunit protein uS7">
    <location>
        <begin position="1"/>
        <end position="156"/>
    </location>
</feature>
<gene>
    <name evidence="1" type="primary">rpsG</name>
    <name type="ordered locus">Aflv_0101</name>
</gene>
<proteinExistence type="inferred from homology"/>
<keyword id="KW-0687">Ribonucleoprotein</keyword>
<keyword id="KW-0689">Ribosomal protein</keyword>
<keyword id="KW-0694">RNA-binding</keyword>
<keyword id="KW-0699">rRNA-binding</keyword>
<keyword id="KW-0820">tRNA-binding</keyword>
<evidence type="ECO:0000255" key="1">
    <source>
        <dbReference type="HAMAP-Rule" id="MF_00480"/>
    </source>
</evidence>
<evidence type="ECO:0000305" key="2"/>
<organism>
    <name type="scientific">Anoxybacillus flavithermus (strain DSM 21510 / WK1)</name>
    <dbReference type="NCBI Taxonomy" id="491915"/>
    <lineage>
        <taxon>Bacteria</taxon>
        <taxon>Bacillati</taxon>
        <taxon>Bacillota</taxon>
        <taxon>Bacilli</taxon>
        <taxon>Bacillales</taxon>
        <taxon>Anoxybacillaceae</taxon>
        <taxon>Anoxybacillus</taxon>
    </lineage>
</organism>
<sequence length="156" mass="17973">MPRKGPVPKRDVLPDPIYNSKLVTRLINKIMIDGKKGKAQKILYTAFDIIRERTGKDPMEVFEQALKNVMPVLEVRARRVGGANYQVPVEVRPERRTTLGLRWLVNYARLRGEKTMEERLANEIMDAANNTGAAVKKREDTHKMAEANKAFAHYRW</sequence>
<name>RS7_ANOFW</name>